<keyword id="KW-1185">Reference proteome</keyword>
<keyword id="KW-0687">Ribonucleoprotein</keyword>
<keyword id="KW-0689">Ribosomal protein</keyword>
<keyword id="KW-0694">RNA-binding</keyword>
<keyword id="KW-0699">rRNA-binding</keyword>
<keyword id="KW-0820">tRNA-binding</keyword>
<comment type="function">
    <text evidence="1">One of the primary rRNA binding proteins, it binds directly to 16S rRNA where it nucleates assembly of the head domain of the 30S subunit. Is located at the subunit interface close to the decoding center, probably blocks exit of the E-site tRNA.</text>
</comment>
<comment type="subunit">
    <text evidence="1">Part of the 30S ribosomal subunit. Contacts proteins S9 and S11.</text>
</comment>
<comment type="similarity">
    <text evidence="1">Belongs to the universal ribosomal protein uS7 family.</text>
</comment>
<accession>A8MLD6</accession>
<reference key="1">
    <citation type="submission" date="2007-10" db="EMBL/GenBank/DDBJ databases">
        <title>Complete genome of Alkaliphilus oremlandii OhILAs.</title>
        <authorList>
            <person name="Copeland A."/>
            <person name="Lucas S."/>
            <person name="Lapidus A."/>
            <person name="Barry K."/>
            <person name="Detter J.C."/>
            <person name="Glavina del Rio T."/>
            <person name="Hammon N."/>
            <person name="Israni S."/>
            <person name="Dalin E."/>
            <person name="Tice H."/>
            <person name="Pitluck S."/>
            <person name="Chain P."/>
            <person name="Malfatti S."/>
            <person name="Shin M."/>
            <person name="Vergez L."/>
            <person name="Schmutz J."/>
            <person name="Larimer F."/>
            <person name="Land M."/>
            <person name="Hauser L."/>
            <person name="Kyrpides N."/>
            <person name="Mikhailova N."/>
            <person name="Stolz J.F."/>
            <person name="Dawson A."/>
            <person name="Fisher E."/>
            <person name="Crable B."/>
            <person name="Perera E."/>
            <person name="Lisak J."/>
            <person name="Ranganathan M."/>
            <person name="Basu P."/>
            <person name="Richardson P."/>
        </authorList>
    </citation>
    <scope>NUCLEOTIDE SEQUENCE [LARGE SCALE GENOMIC DNA]</scope>
    <source>
        <strain>OhILAs</strain>
    </source>
</reference>
<evidence type="ECO:0000255" key="1">
    <source>
        <dbReference type="HAMAP-Rule" id="MF_00480"/>
    </source>
</evidence>
<evidence type="ECO:0000305" key="2"/>
<gene>
    <name evidence="1" type="primary">rpsG</name>
    <name type="ordered locus">Clos_0488</name>
</gene>
<proteinExistence type="inferred from homology"/>
<protein>
    <recommendedName>
        <fullName evidence="1">Small ribosomal subunit protein uS7</fullName>
    </recommendedName>
    <alternativeName>
        <fullName evidence="2">30S ribosomal protein S7</fullName>
    </alternativeName>
</protein>
<feature type="chain" id="PRO_1000060413" description="Small ribosomal subunit protein uS7">
    <location>
        <begin position="1"/>
        <end position="156"/>
    </location>
</feature>
<name>RS7_ALKOO</name>
<sequence length="156" mass="17480">MPRKGSVPKREVLPDPIYGSKVISKLINGIMLDGKKGVAQKIVYDALALINERTGEDALEVFEKAMNNIMPVLEVKARRVGGANYQVPVEVRSDRRQTLGIRWLVNYTRARGEKGMVEKLAKEIIDASNSTGATVKKKEDTHKMAEANKAFAHYRW</sequence>
<organism>
    <name type="scientific">Alkaliphilus oremlandii (strain OhILAs)</name>
    <name type="common">Clostridium oremlandii (strain OhILAs)</name>
    <dbReference type="NCBI Taxonomy" id="350688"/>
    <lineage>
        <taxon>Bacteria</taxon>
        <taxon>Bacillati</taxon>
        <taxon>Bacillota</taxon>
        <taxon>Clostridia</taxon>
        <taxon>Peptostreptococcales</taxon>
        <taxon>Natronincolaceae</taxon>
        <taxon>Alkaliphilus</taxon>
    </lineage>
</organism>
<dbReference type="EMBL" id="CP000853">
    <property type="protein sequence ID" value="ABW18050.1"/>
    <property type="molecule type" value="Genomic_DNA"/>
</dbReference>
<dbReference type="RefSeq" id="WP_012158365.1">
    <property type="nucleotide sequence ID" value="NC_009922.1"/>
</dbReference>
<dbReference type="SMR" id="A8MLD6"/>
<dbReference type="STRING" id="350688.Clos_0488"/>
<dbReference type="KEGG" id="aoe:Clos_0488"/>
<dbReference type="eggNOG" id="COG0049">
    <property type="taxonomic scope" value="Bacteria"/>
</dbReference>
<dbReference type="HOGENOM" id="CLU_072226_1_1_9"/>
<dbReference type="OrthoDB" id="9807653at2"/>
<dbReference type="Proteomes" id="UP000000269">
    <property type="component" value="Chromosome"/>
</dbReference>
<dbReference type="GO" id="GO:0015935">
    <property type="term" value="C:small ribosomal subunit"/>
    <property type="evidence" value="ECO:0007669"/>
    <property type="project" value="InterPro"/>
</dbReference>
<dbReference type="GO" id="GO:0019843">
    <property type="term" value="F:rRNA binding"/>
    <property type="evidence" value="ECO:0007669"/>
    <property type="project" value="UniProtKB-UniRule"/>
</dbReference>
<dbReference type="GO" id="GO:0003735">
    <property type="term" value="F:structural constituent of ribosome"/>
    <property type="evidence" value="ECO:0007669"/>
    <property type="project" value="InterPro"/>
</dbReference>
<dbReference type="GO" id="GO:0000049">
    <property type="term" value="F:tRNA binding"/>
    <property type="evidence" value="ECO:0007669"/>
    <property type="project" value="UniProtKB-UniRule"/>
</dbReference>
<dbReference type="GO" id="GO:0006412">
    <property type="term" value="P:translation"/>
    <property type="evidence" value="ECO:0007669"/>
    <property type="project" value="UniProtKB-UniRule"/>
</dbReference>
<dbReference type="CDD" id="cd14869">
    <property type="entry name" value="uS7_Bacteria"/>
    <property type="match status" value="1"/>
</dbReference>
<dbReference type="FunFam" id="1.10.455.10:FF:000001">
    <property type="entry name" value="30S ribosomal protein S7"/>
    <property type="match status" value="1"/>
</dbReference>
<dbReference type="Gene3D" id="1.10.455.10">
    <property type="entry name" value="Ribosomal protein S7 domain"/>
    <property type="match status" value="1"/>
</dbReference>
<dbReference type="HAMAP" id="MF_00480_B">
    <property type="entry name" value="Ribosomal_uS7_B"/>
    <property type="match status" value="1"/>
</dbReference>
<dbReference type="InterPro" id="IPR000235">
    <property type="entry name" value="Ribosomal_uS7"/>
</dbReference>
<dbReference type="InterPro" id="IPR005717">
    <property type="entry name" value="Ribosomal_uS7_bac/org-type"/>
</dbReference>
<dbReference type="InterPro" id="IPR020606">
    <property type="entry name" value="Ribosomal_uS7_CS"/>
</dbReference>
<dbReference type="InterPro" id="IPR023798">
    <property type="entry name" value="Ribosomal_uS7_dom"/>
</dbReference>
<dbReference type="InterPro" id="IPR036823">
    <property type="entry name" value="Ribosomal_uS7_dom_sf"/>
</dbReference>
<dbReference type="NCBIfam" id="TIGR01029">
    <property type="entry name" value="rpsG_bact"/>
    <property type="match status" value="1"/>
</dbReference>
<dbReference type="PANTHER" id="PTHR11205">
    <property type="entry name" value="RIBOSOMAL PROTEIN S7"/>
    <property type="match status" value="1"/>
</dbReference>
<dbReference type="Pfam" id="PF00177">
    <property type="entry name" value="Ribosomal_S7"/>
    <property type="match status" value="1"/>
</dbReference>
<dbReference type="PIRSF" id="PIRSF002122">
    <property type="entry name" value="RPS7p_RPS7a_RPS5e_RPS7o"/>
    <property type="match status" value="1"/>
</dbReference>
<dbReference type="SUPFAM" id="SSF47973">
    <property type="entry name" value="Ribosomal protein S7"/>
    <property type="match status" value="1"/>
</dbReference>
<dbReference type="PROSITE" id="PS00052">
    <property type="entry name" value="RIBOSOMAL_S7"/>
    <property type="match status" value="1"/>
</dbReference>